<name>DOTB_DOTSN</name>
<gene>
    <name evidence="13" type="primary">dotB</name>
    <name type="ORF">DOTSEDRAFT_75412</name>
</gene>
<dbReference type="EC" id="1.11.-.-" evidence="15"/>
<dbReference type="EMBL" id="KB446546">
    <property type="protein sequence ID" value="EME38644.1"/>
    <property type="molecule type" value="Genomic_DNA"/>
</dbReference>
<dbReference type="SMR" id="M2XZY2"/>
<dbReference type="STRING" id="675120.M2XZY2"/>
<dbReference type="GlyCosmos" id="M2XZY2">
    <property type="glycosylation" value="3 sites, No reported glycans"/>
</dbReference>
<dbReference type="EnsemblFungi" id="EME38644">
    <property type="protein sequence ID" value="EME38644"/>
    <property type="gene ID" value="DOTSEDRAFT_75412"/>
</dbReference>
<dbReference type="eggNOG" id="ENOG502S6CG">
    <property type="taxonomic scope" value="Eukaryota"/>
</dbReference>
<dbReference type="HOGENOM" id="CLU_029871_3_2_1"/>
<dbReference type="OMA" id="HNRFEVD"/>
<dbReference type="OrthoDB" id="407298at2759"/>
<dbReference type="Proteomes" id="UP000016933">
    <property type="component" value="Unassembled WGS sequence"/>
</dbReference>
<dbReference type="GO" id="GO:0046872">
    <property type="term" value="F:metal ion binding"/>
    <property type="evidence" value="ECO:0007669"/>
    <property type="project" value="UniProtKB-KW"/>
</dbReference>
<dbReference type="GO" id="GO:0004601">
    <property type="term" value="F:peroxidase activity"/>
    <property type="evidence" value="ECO:0007669"/>
    <property type="project" value="UniProtKB-KW"/>
</dbReference>
<dbReference type="Gene3D" id="1.10.489.10">
    <property type="entry name" value="Chloroperoxidase-like"/>
    <property type="match status" value="1"/>
</dbReference>
<dbReference type="InterPro" id="IPR000028">
    <property type="entry name" value="Chloroperoxidase"/>
</dbReference>
<dbReference type="InterPro" id="IPR036851">
    <property type="entry name" value="Chloroperoxidase-like_sf"/>
</dbReference>
<dbReference type="PANTHER" id="PTHR33577:SF1">
    <property type="entry name" value="HEME HALOPEROXIDASE FAMILY PROFILE DOMAIN-CONTAINING PROTEIN"/>
    <property type="match status" value="1"/>
</dbReference>
<dbReference type="PANTHER" id="PTHR33577">
    <property type="entry name" value="STERIGMATOCYSTIN BIOSYNTHESIS PEROXIDASE STCC-RELATED"/>
    <property type="match status" value="1"/>
</dbReference>
<dbReference type="Pfam" id="PF01328">
    <property type="entry name" value="Peroxidase_2"/>
    <property type="match status" value="1"/>
</dbReference>
<dbReference type="SUPFAM" id="SSF47571">
    <property type="entry name" value="Cloroperoxidase"/>
    <property type="match status" value="1"/>
</dbReference>
<dbReference type="PROSITE" id="PS51405">
    <property type="entry name" value="HEME_HALOPEROXIDASE"/>
    <property type="match status" value="1"/>
</dbReference>
<protein>
    <recommendedName>
        <fullName evidence="11">Dothistromin biosynthesis peroxidase dotB</fullName>
        <ecNumber evidence="15">1.11.-.-</ecNumber>
    </recommendedName>
    <alternativeName>
        <fullName evidence="11">Dothistromin biosynthesis protein B</fullName>
    </alternativeName>
</protein>
<feature type="signal peptide" evidence="4">
    <location>
        <begin position="1"/>
        <end position="18"/>
    </location>
</feature>
<feature type="chain" id="PRO_5004029526" description="Dothistromin biosynthesis peroxidase dotB">
    <location>
        <begin position="19"/>
        <end position="414"/>
    </location>
</feature>
<feature type="binding site" description="axial binding residue" evidence="2">
    <location>
        <position position="72"/>
    </location>
    <ligand>
        <name>heme</name>
        <dbReference type="ChEBI" id="CHEBI:30413"/>
    </ligand>
    <ligandPart>
        <name>Fe</name>
        <dbReference type="ChEBI" id="CHEBI:18248"/>
    </ligandPart>
</feature>
<feature type="glycosylation site" description="N-linked (GlcNAc...) asparagine" evidence="5">
    <location>
        <position position="187"/>
    </location>
</feature>
<feature type="glycosylation site" description="N-linked (GlcNAc...) asparagine" evidence="5">
    <location>
        <position position="241"/>
    </location>
</feature>
<feature type="glycosylation site" description="N-linked (GlcNAc...) asparagine" evidence="5">
    <location>
        <position position="328"/>
    </location>
</feature>
<evidence type="ECO:0000250" key="1">
    <source>
        <dbReference type="UniProtKB" id="B9W4V6"/>
    </source>
</evidence>
<evidence type="ECO:0000250" key="2">
    <source>
        <dbReference type="UniProtKB" id="P04963"/>
    </source>
</evidence>
<evidence type="ECO:0000250" key="3">
    <source>
        <dbReference type="UniProtKB" id="P50161"/>
    </source>
</evidence>
<evidence type="ECO:0000255" key="4"/>
<evidence type="ECO:0000255" key="5">
    <source>
        <dbReference type="PROSITE-ProRule" id="PRU00498"/>
    </source>
</evidence>
<evidence type="ECO:0000269" key="6">
    <source>
    </source>
</evidence>
<evidence type="ECO:0000269" key="7">
    <source>
    </source>
</evidence>
<evidence type="ECO:0000269" key="8">
    <source>
    </source>
</evidence>
<evidence type="ECO:0000269" key="9">
    <source>
    </source>
</evidence>
<evidence type="ECO:0000269" key="10">
    <source>
    </source>
</evidence>
<evidence type="ECO:0000303" key="11">
    <source>
    </source>
</evidence>
<evidence type="ECO:0000303" key="12">
    <source>
    </source>
</evidence>
<evidence type="ECO:0000303" key="13">
    <source>
    </source>
</evidence>
<evidence type="ECO:0000305" key="14"/>
<evidence type="ECO:0000305" key="15">
    <source>
    </source>
</evidence>
<evidence type="ECO:0000305" key="16">
    <source>
    </source>
</evidence>
<evidence type="ECO:0000305" key="17">
    <source>
    </source>
</evidence>
<evidence type="ECO:0000305" key="18">
    <source>
    </source>
</evidence>
<comment type="function">
    <text evidence="3 6 7 12 16 17 18">Peroxidase; part of the fragmented gene cluster that mediates the biosynthesis of dothistromin (DOTH), a polyketide toxin very similar in structure to the aflatoxin precursor, versicolorin B (PubMed:12039746, PubMed:17683963, PubMed:22069571, PubMed:23207690, PubMed:23448391). The first step of the pathway is the conversion of acetate to norsolorinic acid (NOR) and requires the fatty acid synthase subunits hexA and hexB, as well as the polyketide synthase pksA (PubMed:16649078, PubMed:23207690). PksA combines a hexanoyl starter unit and 7 malonyl-CoA extender units to synthesize the precursor NOR (By similarity). The hexanoyl starter unit is provided to the acyl-carrier protein (ACP) domain by the fungal fatty acid synthase hexA/hexB (By similarity). The second step is the conversion of NOR to averantin (AVN) and requires the norsolorinic acid ketoreductase nor1, which catalyzes the dehydration of norsolorinic acid to form (1'S)-averantin (PubMed:23207690). The cytochrome P450 monooxygenase avnA then catalyzes the hydroxylation of AVN to 5'hydroxyaverantin (HAVN) (PubMed:23207690). The next step is performed by adhA that transforms HAVN to averufin (AVF) (PubMed:23207690). Averufin might then be converted to hydroxyversicolorone by cypX and avfA (PubMed:23207690). Hydroxyversicolorone is further converted versiconal hemiacetal acetate (VHA) by moxY (PubMed:23207690). VHA is then the substrate for the versiconal hemiacetal acetate esterase est1 to yield versiconal (VAL) (PubMed:23207690). Versicolorin B synthase vbsA then converts VAL to versicolorin B (VERB) by closing the bisfuran ring (PubMed:16649078, PubMed:23207690). Then, the activity of the versicolorin B desaturase verB leads to versicolorin A (VERA) (PubMed:23207690). DotB, a predicted chloroperoxidase, may perform epoxidation of the A-ring of VERA (PubMed:23207690). Alternatively, a cytochrome P450, such as cypX or avnA could catalyze this step (PubMed:23207690). It is also possible that another, uncharacterized, cytochrome P450 enzyme is responsible for this step (PubMed:23207690). Opening of the epoxide could potentially be achieved by the epoxide hydrolase epoA (PubMed:23207690). However, epoA seems not to be required for DOTH biosynthesis, but other epoxide hydrolases may have the ability to complement this hydrolysis (PubMed:23207690). Alternatively, opening of the epoxide ring could be achieved non-enzymatically (PubMed:23207690). The next step is the deoxygenation of ring A to yield the 5,8-dihydroxyanthraquinone which is most likely catalyzed by the NADPH dehydrogenase encoded by ver1 (PubMed:23207690). The last stages of DOTH biosynthesis are proposed to involve hydroxylation of the bisfuran (PubMed:23207690). OrdB and norB might have oxidative roles here (PubMed:23207690). An alternative possibility is that cytochrome P450 monoogenases such as avnA and cypX might perform these steps in addition to previously proposed steps (PubMed:23207690).</text>
</comment>
<comment type="cofactor">
    <cofactor evidence="1">
        <name>heme b</name>
        <dbReference type="ChEBI" id="CHEBI:60344"/>
    </cofactor>
    <text evidence="1">Binds 1 heme b (iron(II)-protoporphyrin IX) group.</text>
</comment>
<comment type="pathway">
    <text evidence="12 17">Mycotoxin biosynthesis.</text>
</comment>
<comment type="induction">
    <text evidence="8 9 10">Expression is positively regulated by the dothistromin-specific transcription factors aflR and aflJ (PubMed:23207690, PubMed:25986547). Dothistromin biosynthetic proteins are co-regulated, showing a high level of expression at ealy exponential phase with a subsequent decline in older cultures (PubMed:17683963).</text>
</comment>
<comment type="similarity">
    <text evidence="14">Belongs to the chloroperoxidase family.</text>
</comment>
<sequence length="414" mass="44060">MHFFSAIVLTCLASTAVAYPALEQAASSAEFKEYQKQEKRQTLGFDAASQIVSTTGDHAWQAPGANDIRGPCPGLNSMANHGYIPRNGYTSDAQIIAAMQAVFNISPDFGGFLTVLGSAMGGDGLGFSIGGPPSASLLTATGLVGKPQGMSNTHNRFESDQSITRDDLYQTGNDVTLNMNFFQDLLNSSLPKGWYDIDVLGNHAVKRFQYSVANNPYFFKGLNTAFIPEATSALVTYLFANHSAACPAGCLDATNLKSFYSVTGSGSTLKYTPGHERIPDNWYKYPVGYGVANVFADMVTVYSKYSNQAAFGGNTGTVNSFTGLDVANITGGVYNAETLLQGNNLGCFLFNGMEFFMPDLISNGGVIGDVSGVVSSLTGTITSLLAPFNCPKLSGIDKKAFAIYPGWNDGKPRK</sequence>
<keyword id="KW-0325">Glycoprotein</keyword>
<keyword id="KW-0349">Heme</keyword>
<keyword id="KW-0408">Iron</keyword>
<keyword id="KW-0479">Metal-binding</keyword>
<keyword id="KW-0560">Oxidoreductase</keyword>
<keyword id="KW-0575">Peroxidase</keyword>
<keyword id="KW-1185">Reference proteome</keyword>
<keyword id="KW-0732">Signal</keyword>
<reference key="1">
    <citation type="journal article" date="2012" name="PLoS Genet.">
        <title>The genomes of the fungal plant pathogens Cladosporium fulvum and Dothistroma septosporum reveal adaptation to different hosts and lifestyles but also signatures of common ancestry.</title>
        <authorList>
            <person name="de Wit P.J.G.M."/>
            <person name="van der Burgt A."/>
            <person name="Oekmen B."/>
            <person name="Stergiopoulos I."/>
            <person name="Abd-Elsalam K.A."/>
            <person name="Aerts A.L."/>
            <person name="Bahkali A.H."/>
            <person name="Beenen H.G."/>
            <person name="Chettri P."/>
            <person name="Cox M.P."/>
            <person name="Datema E."/>
            <person name="de Vries R.P."/>
            <person name="Dhillon B."/>
            <person name="Ganley A.R."/>
            <person name="Griffiths S.A."/>
            <person name="Guo Y."/>
            <person name="Hamelin R.C."/>
            <person name="Henrissat B."/>
            <person name="Kabir M.S."/>
            <person name="Jashni M.K."/>
            <person name="Kema G."/>
            <person name="Klaubauf S."/>
            <person name="Lapidus A."/>
            <person name="Levasseur A."/>
            <person name="Lindquist E."/>
            <person name="Mehrabi R."/>
            <person name="Ohm R.A."/>
            <person name="Owen T.J."/>
            <person name="Salamov A."/>
            <person name="Schwelm A."/>
            <person name="Schijlen E."/>
            <person name="Sun H."/>
            <person name="van den Burg H.A."/>
            <person name="van Ham R.C.H.J."/>
            <person name="Zhang S."/>
            <person name="Goodwin S.B."/>
            <person name="Grigoriev I.V."/>
            <person name="Collemare J."/>
            <person name="Bradshaw R.E."/>
        </authorList>
    </citation>
    <scope>NUCLEOTIDE SEQUENCE [LARGE SCALE GENOMIC DNA]</scope>
    <source>
        <strain>NZE10 / CBS 128990</strain>
    </source>
</reference>
<reference key="2">
    <citation type="journal article" date="2012" name="PLoS Pathog.">
        <title>Diverse lifestyles and strategies of plant pathogenesis encoded in the genomes of eighteen Dothideomycetes fungi.</title>
        <authorList>
            <person name="Ohm R.A."/>
            <person name="Feau N."/>
            <person name="Henrissat B."/>
            <person name="Schoch C.L."/>
            <person name="Horwitz B.A."/>
            <person name="Barry K.W."/>
            <person name="Condon B.J."/>
            <person name="Copeland A.C."/>
            <person name="Dhillon B."/>
            <person name="Glaser F."/>
            <person name="Hesse C.N."/>
            <person name="Kosti I."/>
            <person name="LaButti K."/>
            <person name="Lindquist E.A."/>
            <person name="Lucas S."/>
            <person name="Salamov A.A."/>
            <person name="Bradshaw R.E."/>
            <person name="Ciuffetti L."/>
            <person name="Hamelin R.C."/>
            <person name="Kema G.H.J."/>
            <person name="Lawrence C."/>
            <person name="Scott J.A."/>
            <person name="Spatafora J.W."/>
            <person name="Turgeon B.G."/>
            <person name="de Wit P.J.G.M."/>
            <person name="Zhong S."/>
            <person name="Goodwin S.B."/>
            <person name="Grigoriev I.V."/>
        </authorList>
    </citation>
    <scope>NUCLEOTIDE SEQUENCE [LARGE SCALE GENOMIC DNA]</scope>
    <source>
        <strain>NZE10 / CBS 128990</strain>
    </source>
</reference>
<reference key="3">
    <citation type="journal article" date="2002" name="Appl. Environ. Microbiol.">
        <title>Dothistroma pini, a forest pathogen, contains homologs of aflatoxin biosynthetic pathway genes.</title>
        <authorList>
            <person name="Bradshaw R.E."/>
            <person name="Bhatnagar D."/>
            <person name="Ganley R.J."/>
            <person name="Gillman C.J."/>
            <person name="Monahan B.J."/>
            <person name="Seconi J.M."/>
        </authorList>
    </citation>
    <scope>FUNCTION</scope>
</reference>
<reference key="4">
    <citation type="journal article" date="2006" name="Mycopathologia">
        <title>A polyketide synthase gene required for biosynthesis of the aflatoxin-like toxin, dothistromin.</title>
        <authorList>
            <person name="Bradshaw R.E."/>
            <person name="Jin H."/>
            <person name="Morgan B.S."/>
            <person name="Schwelm A."/>
            <person name="Teddy O.R."/>
            <person name="Young C.A."/>
            <person name="Zhang S."/>
        </authorList>
    </citation>
    <scope>FUNCTION</scope>
</reference>
<reference key="5">
    <citation type="journal article" date="2007" name="Fungal Genet. Biol.">
        <title>A fragmented aflatoxin-like gene cluster in the forest pathogen Dothistroma septosporum.</title>
        <authorList>
            <person name="Zhang S."/>
            <person name="Schwelm A."/>
            <person name="Jin H."/>
            <person name="Collins L.J."/>
            <person name="Bradshaw R.E."/>
        </authorList>
    </citation>
    <scope>FUNCTION</scope>
    <scope>INDUCTION</scope>
</reference>
<reference key="6">
    <citation type="journal article" date="2010" name="Toxins">
        <title>Genetics of dothistromin biosynthesis of Dothistroma septosporum: an update.</title>
        <authorList>
            <person name="Schwelm A."/>
            <person name="Bradshaw R.E."/>
        </authorList>
    </citation>
    <scope>REVIEW ON FUNCTION</scope>
    <scope>PATHWAY</scope>
</reference>
<reference key="7">
    <citation type="journal article" date="2013" name="Fungal Genet. Biol.">
        <title>Dothistromin genes at multiple separate loci are regulated by AflR.</title>
        <authorList>
            <person name="Chettri P."/>
            <person name="Ehrlich K.C."/>
            <person name="Cary J.W."/>
            <person name="Collemare J."/>
            <person name="Cox M.P."/>
            <person name="Griffiths S.A."/>
            <person name="Olson M.A."/>
            <person name="de Wit P.J."/>
            <person name="Bradshaw R.E."/>
        </authorList>
    </citation>
    <scope>FUNCTION</scope>
    <scope>INDUCTION</scope>
    <scope>PATHWAY</scope>
</reference>
<reference key="8">
    <citation type="journal article" date="2013" name="New Phytol.">
        <title>Fragmentation of an aflatoxin-like gene cluster in a forest pathogen.</title>
        <authorList>
            <person name="Bradshaw R.E."/>
            <person name="Slot J.C."/>
            <person name="Moore G.G."/>
            <person name="Chettri P."/>
            <person name="de Wit P.J."/>
            <person name="Ehrlich K.C."/>
            <person name="Ganley A.R."/>
            <person name="Olson M.A."/>
            <person name="Rokas A."/>
            <person name="Carbone I."/>
            <person name="Cox M.P."/>
        </authorList>
    </citation>
    <scope>FUNCTION</scope>
</reference>
<reference key="9">
    <citation type="journal article" date="2015" name="Fungal Biol.">
        <title>Regulation of the aflatoxin-like toxin dothistromin by AflJ.</title>
        <authorList>
            <person name="Chettri P."/>
            <person name="Ehrlich K.C."/>
            <person name="Bradshaw R.E."/>
        </authorList>
    </citation>
    <scope>INDUCTION</scope>
</reference>
<proteinExistence type="evidence at transcript level"/>
<organism>
    <name type="scientific">Dothistroma septosporum (strain NZE10 / CBS 128990)</name>
    <name type="common">Red band needle blight fungus</name>
    <name type="synonym">Mycosphaerella pini</name>
    <dbReference type="NCBI Taxonomy" id="675120"/>
    <lineage>
        <taxon>Eukaryota</taxon>
        <taxon>Fungi</taxon>
        <taxon>Dikarya</taxon>
        <taxon>Ascomycota</taxon>
        <taxon>Pezizomycotina</taxon>
        <taxon>Dothideomycetes</taxon>
        <taxon>Dothideomycetidae</taxon>
        <taxon>Mycosphaerellales</taxon>
        <taxon>Mycosphaerellaceae</taxon>
        <taxon>Dothistroma</taxon>
    </lineage>
</organism>
<accession>M2XZY2</accession>